<organism>
    <name type="scientific">Arachis hypogaea</name>
    <name type="common">Peanut</name>
    <dbReference type="NCBI Taxonomy" id="3818"/>
    <lineage>
        <taxon>Eukaryota</taxon>
        <taxon>Viridiplantae</taxon>
        <taxon>Streptophyta</taxon>
        <taxon>Embryophyta</taxon>
        <taxon>Tracheophyta</taxon>
        <taxon>Spermatophyta</taxon>
        <taxon>Magnoliopsida</taxon>
        <taxon>eudicotyledons</taxon>
        <taxon>Gunneridae</taxon>
        <taxon>Pentapetalae</taxon>
        <taxon>rosids</taxon>
        <taxon>fabids</taxon>
        <taxon>Fabales</taxon>
        <taxon>Fabaceae</taxon>
        <taxon>Papilionoideae</taxon>
        <taxon>50 kb inversion clade</taxon>
        <taxon>dalbergioids sensu lato</taxon>
        <taxon>Dalbergieae</taxon>
        <taxon>Pterocarpus clade</taxon>
        <taxon>Arachis</taxon>
    </lineage>
</organism>
<proteinExistence type="evidence at protein level"/>
<protein>
    <recommendedName>
        <fullName evidence="3">Defensin 2</fullName>
    </recommendedName>
    <allergenName evidence="5">Ara h 13.0101</allergenName>
</protein>
<feature type="signal peptide" evidence="2">
    <location>
        <begin position="1" status="less than"/>
        <end position="32"/>
    </location>
</feature>
<feature type="chain" id="PRO_0000435959" description="Defensin 2" evidence="2">
    <location>
        <begin position="33"/>
        <end position="79"/>
    </location>
</feature>
<feature type="disulfide bond" evidence="1">
    <location>
        <begin position="35"/>
        <end position="79"/>
    </location>
</feature>
<feature type="disulfide bond" evidence="1">
    <location>
        <begin position="46"/>
        <end position="67"/>
    </location>
</feature>
<feature type="disulfide bond" evidence="1">
    <location>
        <begin position="52"/>
        <end position="73"/>
    </location>
</feature>
<feature type="non-terminal residue" evidence="4">
    <location>
        <position position="1"/>
    </location>
</feature>
<accession>B3EWP4</accession>
<comment type="function">
    <text evidence="2">Probably has antifungal activity.</text>
</comment>
<comment type="subunit">
    <text evidence="2">May form dimers.</text>
</comment>
<comment type="PTM">
    <text evidence="2">Not glycosylated.</text>
</comment>
<comment type="PTM">
    <text evidence="2">Has 4 disulfide bonds.</text>
</comment>
<comment type="mass spectrometry"/>
<comment type="allergen">
    <text evidence="2">Causes an allergic reaction in human. Binds to IgE.</text>
</comment>
<comment type="similarity">
    <text evidence="4">Belongs to the DEFL family.</text>
</comment>
<evidence type="ECO:0000250" key="1">
    <source>
        <dbReference type="UniProtKB" id="P81929"/>
    </source>
</evidence>
<evidence type="ECO:0000269" key="2">
    <source>
    </source>
</evidence>
<evidence type="ECO:0000303" key="3">
    <source>
    </source>
</evidence>
<evidence type="ECO:0000305" key="4"/>
<evidence type="ECO:0000305" key="5">
    <source>
    </source>
</evidence>
<sequence>VQKRTIIMEKKMAGFCIFFLILFLAQEYGVEGKECLNLSDKFKGPCLGSKNCDHHCRDIEHLLSGVCRDDFRCWCNRKC</sequence>
<reference evidence="4" key="1">
    <citation type="submission" date="2007-11" db="EMBL/GenBank/DDBJ databases">
        <title>Isolation of peanut seed-specific genes by analysis of expressed sequence.</title>
        <authorList>
            <person name="Yin H."/>
            <person name="Cai N.B."/>
            <person name="Huang X.W."/>
            <person name="Luo B.M."/>
            <person name="Li W.X."/>
            <person name="Zhuang W.J."/>
        </authorList>
    </citation>
    <scope>NUCLEOTIDE SEQUENCE [MRNA]</scope>
</reference>
<reference evidence="4" key="2">
    <citation type="journal article" date="2015" name="J. Allergy Clin. Immunol.">
        <title>Peanut defensins: Novel allergens isolated from lipophilic peanut extract.</title>
        <authorList>
            <person name="Petersen A."/>
            <person name="Kull S."/>
            <person name="Rennert S."/>
            <person name="Becker W.M."/>
            <person name="Krause S."/>
            <person name="Ernst M."/>
            <person name="Gutsmann T."/>
            <person name="Bauer J."/>
            <person name="Lindner B."/>
            <person name="Jappe U."/>
        </authorList>
    </citation>
    <scope>PROTEIN SEQUENCE OF 33-79</scope>
    <scope>PROBABLE FUNCTION</scope>
    <scope>PROBABLE DIMERIZATION</scope>
    <scope>LACK OF GLYCOSYLATION</scope>
    <scope>PRESENCE OF DISULFIDE BONDS</scope>
    <scope>MASS SPECTROMETRY</scope>
    <scope>ALLERGEN</scope>
    <scope>IDENTIFICATION BY MASS SPECTROMETRY</scope>
</reference>
<name>DEF2_ARAHY</name>
<dbReference type="EMBL" id="EY396019">
    <property type="status" value="NOT_ANNOTATED_CDS"/>
    <property type="molecule type" value="mRNA"/>
</dbReference>
<dbReference type="SMR" id="B3EWP4"/>
<dbReference type="Allergome" id="10189">
    <property type="allergen name" value="Ara h 13"/>
</dbReference>
<dbReference type="Allergome" id="10190">
    <property type="allergen name" value="Ara h 13.0101"/>
</dbReference>
<dbReference type="GO" id="GO:0050832">
    <property type="term" value="P:defense response to fungus"/>
    <property type="evidence" value="ECO:0007669"/>
    <property type="project" value="UniProtKB-KW"/>
</dbReference>
<dbReference type="GO" id="GO:0031640">
    <property type="term" value="P:killing of cells of another organism"/>
    <property type="evidence" value="ECO:0007669"/>
    <property type="project" value="UniProtKB-KW"/>
</dbReference>
<dbReference type="Gene3D" id="3.30.30.10">
    <property type="entry name" value="Knottin, scorpion toxin-like"/>
    <property type="match status" value="1"/>
</dbReference>
<dbReference type="InterPro" id="IPR008176">
    <property type="entry name" value="Defensin_plant"/>
</dbReference>
<dbReference type="InterPro" id="IPR003614">
    <property type="entry name" value="Scorpion_toxin-like"/>
</dbReference>
<dbReference type="InterPro" id="IPR036574">
    <property type="entry name" value="Scorpion_toxin-like_sf"/>
</dbReference>
<dbReference type="PANTHER" id="PTHR33147:SF56">
    <property type="entry name" value="DEFENSIN"/>
    <property type="match status" value="1"/>
</dbReference>
<dbReference type="PANTHER" id="PTHR33147">
    <property type="entry name" value="DEFENSIN-LIKE PROTEIN 1"/>
    <property type="match status" value="1"/>
</dbReference>
<dbReference type="Pfam" id="PF00304">
    <property type="entry name" value="Gamma-thionin"/>
    <property type="match status" value="1"/>
</dbReference>
<dbReference type="SMART" id="SM00505">
    <property type="entry name" value="Knot1"/>
    <property type="match status" value="1"/>
</dbReference>
<dbReference type="SUPFAM" id="SSF57095">
    <property type="entry name" value="Scorpion toxin-like"/>
    <property type="match status" value="1"/>
</dbReference>
<dbReference type="PROSITE" id="PS00940">
    <property type="entry name" value="GAMMA_THIONIN"/>
    <property type="match status" value="1"/>
</dbReference>
<keyword id="KW-0020">Allergen</keyword>
<keyword id="KW-0929">Antimicrobial</keyword>
<keyword id="KW-0211">Defensin</keyword>
<keyword id="KW-0903">Direct protein sequencing</keyword>
<keyword id="KW-1015">Disulfide bond</keyword>
<keyword id="KW-0295">Fungicide</keyword>
<keyword id="KW-0732">Signal</keyword>